<keyword id="KW-0002">3D-structure</keyword>
<keyword id="KW-0903">Direct protein sequencing</keyword>
<keyword id="KW-1015">Disulfide bond</keyword>
<keyword id="KW-0256">Endoplasmic reticulum</keyword>
<keyword id="KW-0378">Hydrolase</keyword>
<keyword id="KW-0443">Lipid metabolism</keyword>
<keyword id="KW-0492">Microsome</keyword>
<keyword id="KW-1185">Reference proteome</keyword>
<keyword id="KW-0719">Serine esterase</keyword>
<keyword id="KW-0732">Signal</keyword>
<feature type="signal peptide" evidence="3">
    <location>
        <begin position="1"/>
        <end position="26"/>
    </location>
</feature>
<feature type="chain" id="PRO_5000396880" description="Acylcarnitine hydrolase">
    <location>
        <begin position="27"/>
        <end position="561"/>
    </location>
</feature>
<feature type="short sequence motif" description="Prevents secretion from ER" evidence="3">
    <location>
        <begin position="558"/>
        <end position="561"/>
    </location>
</feature>
<feature type="active site" description="Acyl-ester intermediate" evidence="4">
    <location>
        <position position="230"/>
    </location>
</feature>
<feature type="active site" description="Charge relay system" evidence="2">
    <location>
        <position position="347"/>
    </location>
</feature>
<feature type="active site" description="Charge relay system" evidence="2">
    <location>
        <position position="459"/>
    </location>
</feature>
<feature type="disulfide bond" evidence="2">
    <location>
        <begin position="97"/>
        <end position="125"/>
    </location>
</feature>
<feature type="disulfide bond" evidence="2">
    <location>
        <begin position="282"/>
        <end position="293"/>
    </location>
</feature>
<feature type="strand" evidence="8">
    <location>
        <begin position="42"/>
        <end position="44"/>
    </location>
</feature>
<feature type="strand" evidence="8">
    <location>
        <begin position="46"/>
        <end position="48"/>
    </location>
</feature>
<feature type="strand" evidence="8">
    <location>
        <begin position="50"/>
        <end position="55"/>
    </location>
</feature>
<feature type="strand" evidence="8">
    <location>
        <begin position="57"/>
        <end position="64"/>
    </location>
</feature>
<feature type="helix" evidence="8">
    <location>
        <begin position="71"/>
        <end position="73"/>
    </location>
</feature>
<feature type="strand" evidence="8">
    <location>
        <begin position="85"/>
        <end position="89"/>
    </location>
</feature>
<feature type="helix" evidence="8">
    <location>
        <begin position="101"/>
        <end position="106"/>
    </location>
</feature>
<feature type="helix" evidence="8">
    <location>
        <begin position="116"/>
        <end position="118"/>
    </location>
</feature>
<feature type="strand" evidence="8">
    <location>
        <begin position="127"/>
        <end position="133"/>
    </location>
</feature>
<feature type="strand" evidence="8">
    <location>
        <begin position="142"/>
        <end position="148"/>
    </location>
</feature>
<feature type="turn" evidence="8">
    <location>
        <begin position="152"/>
        <end position="154"/>
    </location>
</feature>
<feature type="helix" evidence="8">
    <location>
        <begin position="158"/>
        <end position="160"/>
    </location>
</feature>
<feature type="helix" evidence="8">
    <location>
        <begin position="164"/>
        <end position="170"/>
    </location>
</feature>
<feature type="strand" evidence="8">
    <location>
        <begin position="173"/>
        <end position="177"/>
    </location>
</feature>
<feature type="helix" evidence="8">
    <location>
        <begin position="182"/>
        <end position="186"/>
    </location>
</feature>
<feature type="helix" evidence="8">
    <location>
        <begin position="198"/>
        <end position="213"/>
    </location>
</feature>
<feature type="helix" evidence="8">
    <location>
        <begin position="214"/>
        <end position="217"/>
    </location>
</feature>
<feature type="strand" evidence="8">
    <location>
        <begin position="219"/>
        <end position="229"/>
    </location>
</feature>
<feature type="helix" evidence="8">
    <location>
        <begin position="231"/>
        <end position="241"/>
    </location>
</feature>
<feature type="helix" evidence="8">
    <location>
        <begin position="243"/>
        <end position="245"/>
    </location>
</feature>
<feature type="strand" evidence="8">
    <location>
        <begin position="250"/>
        <end position="256"/>
    </location>
</feature>
<feature type="helix" evidence="8">
    <location>
        <begin position="262"/>
        <end position="264"/>
    </location>
</feature>
<feature type="helix" evidence="8">
    <location>
        <begin position="270"/>
        <end position="280"/>
    </location>
</feature>
<feature type="helix" evidence="8">
    <location>
        <begin position="287"/>
        <end position="295"/>
    </location>
</feature>
<feature type="helix" evidence="8">
    <location>
        <begin position="299"/>
        <end position="306"/>
    </location>
</feature>
<feature type="strand" evidence="8">
    <location>
        <begin position="318"/>
        <end position="320"/>
    </location>
</feature>
<feature type="helix" evidence="8">
    <location>
        <begin position="325"/>
        <end position="330"/>
    </location>
</feature>
<feature type="strand" evidence="8">
    <location>
        <begin position="339"/>
        <end position="344"/>
    </location>
</feature>
<feature type="helix" evidence="8">
    <location>
        <begin position="351"/>
        <end position="355"/>
    </location>
</feature>
<feature type="helix" evidence="8">
    <location>
        <begin position="359"/>
        <end position="363"/>
    </location>
</feature>
<feature type="turn" evidence="8">
    <location>
        <begin position="367"/>
        <end position="369"/>
    </location>
</feature>
<feature type="helix" evidence="8">
    <location>
        <begin position="370"/>
        <end position="380"/>
    </location>
</feature>
<feature type="helix" evidence="8">
    <location>
        <begin position="385"/>
        <end position="387"/>
    </location>
</feature>
<feature type="helix" evidence="8">
    <location>
        <begin position="388"/>
        <end position="395"/>
    </location>
</feature>
<feature type="turn" evidence="8">
    <location>
        <begin position="396"/>
        <end position="398"/>
    </location>
</feature>
<feature type="helix" evidence="8">
    <location>
        <begin position="402"/>
        <end position="417"/>
    </location>
</feature>
<feature type="helix" evidence="8">
    <location>
        <begin position="419"/>
        <end position="430"/>
    </location>
</feature>
<feature type="strand" evidence="8">
    <location>
        <begin position="435"/>
        <end position="440"/>
    </location>
</feature>
<feature type="helix" evidence="8">
    <location>
        <begin position="445"/>
        <end position="447"/>
    </location>
</feature>
<feature type="turn" evidence="8">
    <location>
        <begin position="448"/>
        <end position="450"/>
    </location>
</feature>
<feature type="turn" evidence="8">
    <location>
        <begin position="459"/>
        <end position="462"/>
    </location>
</feature>
<feature type="helix" evidence="8">
    <location>
        <begin position="463"/>
        <end position="467"/>
    </location>
</feature>
<feature type="helix" evidence="8">
    <location>
        <begin position="471"/>
        <end position="473"/>
    </location>
</feature>
<feature type="helix" evidence="8">
    <location>
        <begin position="480"/>
        <end position="499"/>
    </location>
</feature>
<feature type="strand" evidence="8">
    <location>
        <begin position="518"/>
        <end position="525"/>
    </location>
</feature>
<feature type="strand" evidence="8">
    <location>
        <begin position="527"/>
        <end position="531"/>
    </location>
</feature>
<feature type="helix" evidence="8">
    <location>
        <begin position="534"/>
        <end position="541"/>
    </location>
</feature>
<feature type="helix" evidence="8">
    <location>
        <begin position="543"/>
        <end position="549"/>
    </location>
</feature>
<feature type="helix" evidence="8">
    <location>
        <begin position="551"/>
        <end position="559"/>
    </location>
</feature>
<accession>Q91WG0</accession>
<comment type="function">
    <text evidence="1 5">Hydrolase with high activity towards palmitoylcarnitine. Is also active with p-nitrophenylacetate and alpha-naphthylacetate. May also hydrolyze retinyl esters (By similarity).</text>
</comment>
<comment type="catalytic activity">
    <reaction evidence="5">
        <text>an O-acyl-(R)-carnitine + H2O = (R)-carnitine + a fatty acid + H(+)</text>
        <dbReference type="Rhea" id="RHEA:17101"/>
        <dbReference type="ChEBI" id="CHEBI:15377"/>
        <dbReference type="ChEBI" id="CHEBI:15378"/>
        <dbReference type="ChEBI" id="CHEBI:16347"/>
        <dbReference type="ChEBI" id="CHEBI:28868"/>
        <dbReference type="ChEBI" id="CHEBI:75659"/>
        <dbReference type="EC" id="3.1.1.28"/>
    </reaction>
</comment>
<comment type="catalytic activity">
    <reaction evidence="1">
        <text>all-trans-retinyl hexadecanoate + H2O = all-trans-retinol + hexadecanoate + H(+)</text>
        <dbReference type="Rhea" id="RHEA:13933"/>
        <dbReference type="ChEBI" id="CHEBI:7896"/>
        <dbReference type="ChEBI" id="CHEBI:15377"/>
        <dbReference type="ChEBI" id="CHEBI:15378"/>
        <dbReference type="ChEBI" id="CHEBI:17336"/>
        <dbReference type="ChEBI" id="CHEBI:17616"/>
    </reaction>
    <physiologicalReaction direction="left-to-right" evidence="1">
        <dbReference type="Rhea" id="RHEA:13934"/>
    </physiologicalReaction>
</comment>
<comment type="biophysicochemical properties">
    <kinetics>
        <KM>98.8 uM for palmitoyl-dl-carnitine</KM>
        <KM>392 uM for p-nitrophenylacetate</KM>
        <Vmax>1.67 umol/min/mg enzyme with palmitoyl-dl-carnitine</Vmax>
        <Vmax>353.0 umol/min/mg enzyme with p-nitrophenylacetate</Vmax>
    </kinetics>
</comment>
<comment type="subcellular location">
    <subcellularLocation>
        <location evidence="5">Microsome</location>
    </subcellularLocation>
    <subcellularLocation>
        <location evidence="6">Endoplasmic reticulum</location>
    </subcellularLocation>
</comment>
<comment type="tissue specificity">
    <text evidence="5">Detected in liver (at protein level).</text>
</comment>
<comment type="induction">
    <text evidence="5">Up-regulated in liver by di-(2-ethylhexyl)phtalate (DEHP).</text>
</comment>
<comment type="similarity">
    <text evidence="6">Belongs to the type-B carboxylesterase/lipase family.</text>
</comment>
<evidence type="ECO:0000250" key="1">
    <source>
        <dbReference type="UniProtKB" id="O70631"/>
    </source>
</evidence>
<evidence type="ECO:0000250" key="2">
    <source>
        <dbReference type="UniProtKB" id="P23141"/>
    </source>
</evidence>
<evidence type="ECO:0000255" key="3"/>
<evidence type="ECO:0000255" key="4">
    <source>
        <dbReference type="PROSITE-ProRule" id="PRU10039"/>
    </source>
</evidence>
<evidence type="ECO:0000269" key="5">
    <source>
    </source>
</evidence>
<evidence type="ECO:0000305" key="6"/>
<evidence type="ECO:0000312" key="7">
    <source>
        <dbReference type="MGI" id="MGI:2385905"/>
    </source>
</evidence>
<evidence type="ECO:0007829" key="8">
    <source>
        <dbReference type="PDB" id="8AXC"/>
    </source>
</evidence>
<sequence length="561" mass="62470">MTRNQLHNWLNAGFFGLLLLLIHVQGQDSPEANPIRNTHTGQIQGSLIHVKDTKAGVHTFLGIPFAKPPVGPLRFAPPEAPEPWSGVRDGTAHPAMCLQNLDMLNEAGLPDMKMMLSSFPMSEDCLYLNIYTPAHAHEGSNLPVMVWIHGGALVIGMASMFDGSLLTVNEDLVVVTIQYRLGVLGFFSTGDQHARGNWGYLDQAAALRWVQQNIAHFGGNPDRVTIFGESAGGTSVSSHVVSPMSQGLFHGAIMESGVALLPDLISETSEMVSTTVAKLSGCEAMDSQALVRCLRGKSEAEILAINKVFKMIPAVVDGEFFPRHPKELLASEDFHPVPSIIGVNNDEFGWSIPVVMGSAQMIKGITRENLQAVLKDTAVQMMLPPECSDLLMEEYMGDTEDAQTLQIQFTEMMGDFMFVIPALQVAHFQRSHAPVYFYEFQHPPSYFKDVRPPHVKADHADEIPFVFASFFWGMKLDFTEEEELLSRRMMKYWANFARHGNPNSEGLPYWPVMDHDEQYLQLDIQPAVGRALKAGRLQFWTKTLPQKIQELKASQDKHREL</sequence>
<name>EST2C_MOUSE</name>
<organism>
    <name type="scientific">Mus musculus</name>
    <name type="common">Mouse</name>
    <dbReference type="NCBI Taxonomy" id="10090"/>
    <lineage>
        <taxon>Eukaryota</taxon>
        <taxon>Metazoa</taxon>
        <taxon>Chordata</taxon>
        <taxon>Craniata</taxon>
        <taxon>Vertebrata</taxon>
        <taxon>Euteleostomi</taxon>
        <taxon>Mammalia</taxon>
        <taxon>Eutheria</taxon>
        <taxon>Euarchontoglires</taxon>
        <taxon>Glires</taxon>
        <taxon>Rodentia</taxon>
        <taxon>Myomorpha</taxon>
        <taxon>Muroidea</taxon>
        <taxon>Muridae</taxon>
        <taxon>Murinae</taxon>
        <taxon>Mus</taxon>
        <taxon>Mus</taxon>
    </lineage>
</organism>
<proteinExistence type="evidence at protein level"/>
<gene>
    <name evidence="7" type="primary">Ces2c</name>
    <name type="synonym">Ces2</name>
</gene>
<reference key="1">
    <citation type="journal article" date="2003" name="Arch. Biochem. Biophys.">
        <title>Purification, molecular cloning, and functional expression of inducible liver acylcarnitine hydrolase in C57BL/6 mouse, belonging to the carboxylesterase multigene family.</title>
        <authorList>
            <person name="Furihata T."/>
            <person name="Hosokawa M."/>
            <person name="Nakata F."/>
            <person name="Satoh T."/>
            <person name="Chiba K."/>
        </authorList>
    </citation>
    <scope>NUCLEOTIDE SEQUENCE [MRNA]</scope>
    <scope>PARTIAL PROTEIN SEQUENCE</scope>
    <scope>CATALYTIC ACTIVITY</scope>
    <scope>FUNCTION</scope>
    <scope>SUBCELLULAR LOCATION</scope>
    <scope>TISSUE SPECIFICITY</scope>
    <scope>INDUCTION</scope>
    <scope>IDENTIFICATION BY MASS SPECTROMETRY</scope>
    <source>
        <strain>C57BL/6J</strain>
        <tissue>Liver</tissue>
    </source>
</reference>
<reference key="2">
    <citation type="journal article" date="2009" name="PLoS Biol.">
        <title>Lineage-specific biology revealed by a finished genome assembly of the mouse.</title>
        <authorList>
            <person name="Church D.M."/>
            <person name="Goodstadt L."/>
            <person name="Hillier L.W."/>
            <person name="Zody M.C."/>
            <person name="Goldstein S."/>
            <person name="She X."/>
            <person name="Bult C.J."/>
            <person name="Agarwala R."/>
            <person name="Cherry J.L."/>
            <person name="DiCuccio M."/>
            <person name="Hlavina W."/>
            <person name="Kapustin Y."/>
            <person name="Meric P."/>
            <person name="Maglott D."/>
            <person name="Birtle Z."/>
            <person name="Marques A.C."/>
            <person name="Graves T."/>
            <person name="Zhou S."/>
            <person name="Teague B."/>
            <person name="Potamousis K."/>
            <person name="Churas C."/>
            <person name="Place M."/>
            <person name="Herschleb J."/>
            <person name="Runnheim R."/>
            <person name="Forrest D."/>
            <person name="Amos-Landgraf J."/>
            <person name="Schwartz D.C."/>
            <person name="Cheng Z."/>
            <person name="Lindblad-Toh K."/>
            <person name="Eichler E.E."/>
            <person name="Ponting C.P."/>
        </authorList>
    </citation>
    <scope>NUCLEOTIDE SEQUENCE [LARGE SCALE GENOMIC DNA]</scope>
    <source>
        <strain>C57BL/6J</strain>
    </source>
</reference>
<reference key="3">
    <citation type="journal article" date="2004" name="Genome Res.">
        <title>The status, quality, and expansion of the NIH full-length cDNA project: the Mammalian Gene Collection (MGC).</title>
        <authorList>
            <consortium name="The MGC Project Team"/>
        </authorList>
    </citation>
    <scope>NUCLEOTIDE SEQUENCE [LARGE SCALE MRNA]</scope>
    <source>
        <strain>FVB/N</strain>
        <tissue>Colon</tissue>
        <tissue>Kidney</tissue>
    </source>
</reference>
<reference key="4">
    <citation type="journal article" date="2010" name="Cell">
        <title>A tissue-specific atlas of mouse protein phosphorylation and expression.</title>
        <authorList>
            <person name="Huttlin E.L."/>
            <person name="Jedrychowski M.P."/>
            <person name="Elias J.E."/>
            <person name="Goswami T."/>
            <person name="Rad R."/>
            <person name="Beausoleil S.A."/>
            <person name="Villen J."/>
            <person name="Haas W."/>
            <person name="Sowa M.E."/>
            <person name="Gygi S.P."/>
        </authorList>
    </citation>
    <scope>IDENTIFICATION BY MASS SPECTROMETRY [LARGE SCALE ANALYSIS]</scope>
    <source>
        <tissue>Kidney</tissue>
    </source>
</reference>
<dbReference type="EC" id="3.1.1.28"/>
<dbReference type="EC" id="3.1.1.-"/>
<dbReference type="EMBL" id="AB110073">
    <property type="protein sequence ID" value="BAC76623.1"/>
    <property type="molecule type" value="mRNA"/>
</dbReference>
<dbReference type="EMBL" id="AC156564">
    <property type="status" value="NOT_ANNOTATED_CDS"/>
    <property type="molecule type" value="Genomic_DNA"/>
</dbReference>
<dbReference type="EMBL" id="BC015290">
    <property type="protein sequence ID" value="AAH15290.1"/>
    <property type="molecule type" value="mRNA"/>
</dbReference>
<dbReference type="EMBL" id="BC024552">
    <property type="protein sequence ID" value="AAH24552.1"/>
    <property type="molecule type" value="mRNA"/>
</dbReference>
<dbReference type="EMBL" id="BC031170">
    <property type="protein sequence ID" value="AAH31170.1"/>
    <property type="molecule type" value="mRNA"/>
</dbReference>
<dbReference type="EMBL" id="BC034178">
    <property type="protein sequence ID" value="AAH34178.1"/>
    <property type="molecule type" value="mRNA"/>
</dbReference>
<dbReference type="EMBL" id="BC034180">
    <property type="protein sequence ID" value="AAH34180.1"/>
    <property type="molecule type" value="mRNA"/>
</dbReference>
<dbReference type="EMBL" id="BC034191">
    <property type="protein sequence ID" value="AAH34191.1"/>
    <property type="molecule type" value="mRNA"/>
</dbReference>
<dbReference type="CCDS" id="CCDS22587.1"/>
<dbReference type="RefSeq" id="NP_663578.1">
    <property type="nucleotide sequence ID" value="NM_145603.2"/>
</dbReference>
<dbReference type="PDB" id="8AXC">
    <property type="method" value="X-ray"/>
    <property type="resolution" value="2.12 A"/>
    <property type="chains" value="A/B/C/D=1-561"/>
</dbReference>
<dbReference type="PDBsum" id="8AXC"/>
<dbReference type="SMR" id="Q91WG0"/>
<dbReference type="FunCoup" id="Q91WG0">
    <property type="interactions" value="604"/>
</dbReference>
<dbReference type="STRING" id="10090.ENSMUSP00000058567"/>
<dbReference type="BindingDB" id="Q91WG0"/>
<dbReference type="ChEMBL" id="CHEMBL2217"/>
<dbReference type="ESTHER" id="mouse-Ces2c">
    <property type="family name" value="Carb_B_Chordata"/>
</dbReference>
<dbReference type="MEROPS" id="S09.999"/>
<dbReference type="iPTMnet" id="Q91WG0"/>
<dbReference type="PhosphoSitePlus" id="Q91WG0"/>
<dbReference type="jPOST" id="Q91WG0"/>
<dbReference type="PaxDb" id="10090-ENSMUSP00000058567"/>
<dbReference type="PeptideAtlas" id="Q91WG0"/>
<dbReference type="ProteomicsDB" id="275649"/>
<dbReference type="DNASU" id="234671"/>
<dbReference type="Ensembl" id="ENSMUST00000055052.6">
    <property type="protein sequence ID" value="ENSMUSP00000058567.6"/>
    <property type="gene ID" value="ENSMUSG00000061825.11"/>
</dbReference>
<dbReference type="GeneID" id="234671"/>
<dbReference type="KEGG" id="mmu:234671"/>
<dbReference type="UCSC" id="uc009nbe.2">
    <property type="organism name" value="mouse"/>
</dbReference>
<dbReference type="AGR" id="MGI:2385905"/>
<dbReference type="CTD" id="234671"/>
<dbReference type="MGI" id="MGI:2385905">
    <property type="gene designation" value="Ces2c"/>
</dbReference>
<dbReference type="VEuPathDB" id="HostDB:ENSMUSG00000061825"/>
<dbReference type="eggNOG" id="KOG1516">
    <property type="taxonomic scope" value="Eukaryota"/>
</dbReference>
<dbReference type="GeneTree" id="ENSGT00940000153793"/>
<dbReference type="HOGENOM" id="CLU_006586_13_0_1"/>
<dbReference type="InParanoid" id="Q91WG0"/>
<dbReference type="OMA" id="MTWAYAF"/>
<dbReference type="OrthoDB" id="3200163at2759"/>
<dbReference type="PhylomeDB" id="Q91WG0"/>
<dbReference type="TreeFam" id="TF315470"/>
<dbReference type="BioGRID-ORCS" id="234671">
    <property type="hits" value="3 hits in 76 CRISPR screens"/>
</dbReference>
<dbReference type="ChiTaRS" id="Ces2c">
    <property type="organism name" value="mouse"/>
</dbReference>
<dbReference type="PRO" id="PR:Q91WG0"/>
<dbReference type="Proteomes" id="UP000000589">
    <property type="component" value="Chromosome 8"/>
</dbReference>
<dbReference type="RNAct" id="Q91WG0">
    <property type="molecule type" value="protein"/>
</dbReference>
<dbReference type="Bgee" id="ENSMUSG00000061825">
    <property type="expression patterns" value="Expressed in proximal tubule and 26 other cell types or tissues"/>
</dbReference>
<dbReference type="GO" id="GO:0005783">
    <property type="term" value="C:endoplasmic reticulum"/>
    <property type="evidence" value="ECO:0007669"/>
    <property type="project" value="UniProtKB-SubCell"/>
</dbReference>
<dbReference type="GO" id="GO:0043231">
    <property type="term" value="C:intracellular membrane-bounded organelle"/>
    <property type="evidence" value="ECO:0000314"/>
    <property type="project" value="UniProtKB"/>
</dbReference>
<dbReference type="GO" id="GO:0047619">
    <property type="term" value="F:acylcarnitine hydrolase activity"/>
    <property type="evidence" value="ECO:0000314"/>
    <property type="project" value="UniProtKB"/>
</dbReference>
<dbReference type="GO" id="GO:0047376">
    <property type="term" value="F:all-trans-retinyl-palmitate hydrolase, all-trans-retinol forming activity"/>
    <property type="evidence" value="ECO:0007669"/>
    <property type="project" value="RHEA"/>
</dbReference>
<dbReference type="CDD" id="cd00312">
    <property type="entry name" value="Esterase_lipase"/>
    <property type="match status" value="1"/>
</dbReference>
<dbReference type="FunFam" id="3.40.50.1820:FF:000011">
    <property type="entry name" value="Carboxylic ester hydrolase"/>
    <property type="match status" value="1"/>
</dbReference>
<dbReference type="Gene3D" id="3.40.50.1820">
    <property type="entry name" value="alpha/beta hydrolase"/>
    <property type="match status" value="1"/>
</dbReference>
<dbReference type="InterPro" id="IPR029058">
    <property type="entry name" value="AB_hydrolase_fold"/>
</dbReference>
<dbReference type="InterPro" id="IPR002018">
    <property type="entry name" value="CarbesteraseB"/>
</dbReference>
<dbReference type="InterPro" id="IPR019826">
    <property type="entry name" value="Carboxylesterase_B_AS"/>
</dbReference>
<dbReference type="InterPro" id="IPR019819">
    <property type="entry name" value="Carboxylesterase_B_CS"/>
</dbReference>
<dbReference type="InterPro" id="IPR050309">
    <property type="entry name" value="Type-B_Carboxylest/Lipase"/>
</dbReference>
<dbReference type="PANTHER" id="PTHR11559">
    <property type="entry name" value="CARBOXYLESTERASE"/>
    <property type="match status" value="1"/>
</dbReference>
<dbReference type="Pfam" id="PF00135">
    <property type="entry name" value="COesterase"/>
    <property type="match status" value="1"/>
</dbReference>
<dbReference type="SUPFAM" id="SSF53474">
    <property type="entry name" value="alpha/beta-Hydrolases"/>
    <property type="match status" value="1"/>
</dbReference>
<dbReference type="PROSITE" id="PS00122">
    <property type="entry name" value="CARBOXYLESTERASE_B_1"/>
    <property type="match status" value="1"/>
</dbReference>
<dbReference type="PROSITE" id="PS00941">
    <property type="entry name" value="CARBOXYLESTERASE_B_2"/>
    <property type="match status" value="1"/>
</dbReference>
<protein>
    <recommendedName>
        <fullName>Acylcarnitine hydrolase</fullName>
        <shortName>ACH M1</shortName>
        <ecNumber>3.1.1.28</ecNumber>
    </recommendedName>
    <alternativeName>
        <fullName>Carboxylesterase 2</fullName>
        <shortName>CES 2</shortName>
    </alternativeName>
    <alternativeName>
        <fullName evidence="6">Carboxylic ester hydrolase</fullName>
        <ecNumber>3.1.1.-</ecNumber>
    </alternativeName>
    <alternativeName>
        <fullName>Peroxisome proliferator-inducible acylcarnitine hydrolase</fullName>
    </alternativeName>
</protein>